<sequence>METVASTQVQTLIVRRFGLVSYEPVWRAMQDFTQQRDAETTDEVWLLQHEPVFTQGQAGDAEHVLFPGDIPVVQVDRGGQVTYHGPGQLMVYLLLDLRRLKMGARDLVTMIENTLVDTLAGYGIEAHARKDAPGVYVGDAKIASLGLRIRRGSSFHGLALNVDMDLEPFLRINPCGYQGLRMTQIKEFVPDVSWASVADAWLSQFVRAAGFQSVVEQRGLPGDE</sequence>
<evidence type="ECO:0000255" key="1">
    <source>
        <dbReference type="HAMAP-Rule" id="MF_00013"/>
    </source>
</evidence>
<evidence type="ECO:0000255" key="2">
    <source>
        <dbReference type="PROSITE-ProRule" id="PRU01067"/>
    </source>
</evidence>
<reference key="1">
    <citation type="journal article" date="2005" name="Nucleic Acids Res.">
        <title>Genomic blueprint of Hahella chejuensis, a marine microbe producing an algicidal agent.</title>
        <authorList>
            <person name="Jeong H."/>
            <person name="Yim J.H."/>
            <person name="Lee C."/>
            <person name="Choi S.-H."/>
            <person name="Park Y.K."/>
            <person name="Yoon S.H."/>
            <person name="Hur C.-G."/>
            <person name="Kang H.-Y."/>
            <person name="Kim D."/>
            <person name="Lee H.H."/>
            <person name="Park K.H."/>
            <person name="Park S.-H."/>
            <person name="Park H.-S."/>
            <person name="Lee H.K."/>
            <person name="Oh T.K."/>
            <person name="Kim J.F."/>
        </authorList>
    </citation>
    <scope>NUCLEOTIDE SEQUENCE [LARGE SCALE GENOMIC DNA]</scope>
    <source>
        <strain>KCTC 2396</strain>
    </source>
</reference>
<accession>Q2SA37</accession>
<keyword id="KW-0012">Acyltransferase</keyword>
<keyword id="KW-0963">Cytoplasm</keyword>
<keyword id="KW-1185">Reference proteome</keyword>
<keyword id="KW-0808">Transferase</keyword>
<name>LIPB_HAHCH</name>
<dbReference type="EC" id="2.3.1.181" evidence="1"/>
<dbReference type="EMBL" id="CP000155">
    <property type="protein sequence ID" value="ABC32487.1"/>
    <property type="molecule type" value="Genomic_DNA"/>
</dbReference>
<dbReference type="RefSeq" id="WP_011399546.1">
    <property type="nucleotide sequence ID" value="NC_007645.1"/>
</dbReference>
<dbReference type="SMR" id="Q2SA37"/>
<dbReference type="STRING" id="349521.HCH_05837"/>
<dbReference type="KEGG" id="hch:HCH_05837"/>
<dbReference type="eggNOG" id="COG0321">
    <property type="taxonomic scope" value="Bacteria"/>
</dbReference>
<dbReference type="HOGENOM" id="CLU_035168_3_1_6"/>
<dbReference type="OrthoDB" id="9787061at2"/>
<dbReference type="UniPathway" id="UPA00538">
    <property type="reaction ID" value="UER00592"/>
</dbReference>
<dbReference type="Proteomes" id="UP000000238">
    <property type="component" value="Chromosome"/>
</dbReference>
<dbReference type="GO" id="GO:0005737">
    <property type="term" value="C:cytoplasm"/>
    <property type="evidence" value="ECO:0007669"/>
    <property type="project" value="UniProtKB-SubCell"/>
</dbReference>
<dbReference type="GO" id="GO:0033819">
    <property type="term" value="F:lipoyl(octanoyl) transferase activity"/>
    <property type="evidence" value="ECO:0007669"/>
    <property type="project" value="UniProtKB-EC"/>
</dbReference>
<dbReference type="GO" id="GO:0036211">
    <property type="term" value="P:protein modification process"/>
    <property type="evidence" value="ECO:0007669"/>
    <property type="project" value="InterPro"/>
</dbReference>
<dbReference type="CDD" id="cd16444">
    <property type="entry name" value="LipB"/>
    <property type="match status" value="1"/>
</dbReference>
<dbReference type="FunFam" id="3.30.930.10:FF:000020">
    <property type="entry name" value="Octanoyltransferase"/>
    <property type="match status" value="1"/>
</dbReference>
<dbReference type="Gene3D" id="3.30.930.10">
    <property type="entry name" value="Bira Bifunctional Protein, Domain 2"/>
    <property type="match status" value="1"/>
</dbReference>
<dbReference type="HAMAP" id="MF_00013">
    <property type="entry name" value="LipB"/>
    <property type="match status" value="1"/>
</dbReference>
<dbReference type="InterPro" id="IPR045864">
    <property type="entry name" value="aa-tRNA-synth_II/BPL/LPL"/>
</dbReference>
<dbReference type="InterPro" id="IPR004143">
    <property type="entry name" value="BPL_LPL_catalytic"/>
</dbReference>
<dbReference type="InterPro" id="IPR000544">
    <property type="entry name" value="Octanoyltransferase"/>
</dbReference>
<dbReference type="InterPro" id="IPR020605">
    <property type="entry name" value="Octanoyltransferase_CS"/>
</dbReference>
<dbReference type="NCBIfam" id="TIGR00214">
    <property type="entry name" value="lipB"/>
    <property type="match status" value="1"/>
</dbReference>
<dbReference type="NCBIfam" id="NF010922">
    <property type="entry name" value="PRK14342.1"/>
    <property type="match status" value="1"/>
</dbReference>
<dbReference type="PANTHER" id="PTHR10993:SF7">
    <property type="entry name" value="LIPOYLTRANSFERASE 2, MITOCHONDRIAL-RELATED"/>
    <property type="match status" value="1"/>
</dbReference>
<dbReference type="PANTHER" id="PTHR10993">
    <property type="entry name" value="OCTANOYLTRANSFERASE"/>
    <property type="match status" value="1"/>
</dbReference>
<dbReference type="Pfam" id="PF21948">
    <property type="entry name" value="LplA-B_cat"/>
    <property type="match status" value="1"/>
</dbReference>
<dbReference type="SUPFAM" id="SSF55681">
    <property type="entry name" value="Class II aaRS and biotin synthetases"/>
    <property type="match status" value="1"/>
</dbReference>
<dbReference type="PROSITE" id="PS51733">
    <property type="entry name" value="BPL_LPL_CATALYTIC"/>
    <property type="match status" value="1"/>
</dbReference>
<dbReference type="PROSITE" id="PS01313">
    <property type="entry name" value="LIPB"/>
    <property type="match status" value="1"/>
</dbReference>
<organism>
    <name type="scientific">Hahella chejuensis (strain KCTC 2396)</name>
    <dbReference type="NCBI Taxonomy" id="349521"/>
    <lineage>
        <taxon>Bacteria</taxon>
        <taxon>Pseudomonadati</taxon>
        <taxon>Pseudomonadota</taxon>
        <taxon>Gammaproteobacteria</taxon>
        <taxon>Oceanospirillales</taxon>
        <taxon>Hahellaceae</taxon>
        <taxon>Hahella</taxon>
    </lineage>
</organism>
<gene>
    <name evidence="1" type="primary">lipB</name>
    <name type="ordered locus">HCH_05837</name>
</gene>
<proteinExistence type="inferred from homology"/>
<feature type="chain" id="PRO_0000242727" description="Octanoyltransferase">
    <location>
        <begin position="1"/>
        <end position="224"/>
    </location>
</feature>
<feature type="domain" description="BPL/LPL catalytic" evidence="2">
    <location>
        <begin position="38"/>
        <end position="213"/>
    </location>
</feature>
<feature type="active site" description="Acyl-thioester intermediate" evidence="1">
    <location>
        <position position="175"/>
    </location>
</feature>
<feature type="binding site" evidence="1">
    <location>
        <begin position="77"/>
        <end position="84"/>
    </location>
    <ligand>
        <name>substrate</name>
    </ligand>
</feature>
<feature type="binding site" evidence="1">
    <location>
        <begin position="144"/>
        <end position="146"/>
    </location>
    <ligand>
        <name>substrate</name>
    </ligand>
</feature>
<feature type="binding site" evidence="1">
    <location>
        <begin position="157"/>
        <end position="159"/>
    </location>
    <ligand>
        <name>substrate</name>
    </ligand>
</feature>
<feature type="site" description="Lowers pKa of active site Cys" evidence="1">
    <location>
        <position position="141"/>
    </location>
</feature>
<comment type="function">
    <text evidence="1">Catalyzes the transfer of endogenously produced octanoic acid from octanoyl-acyl-carrier-protein onto the lipoyl domains of lipoate-dependent enzymes. Lipoyl-ACP can also act as a substrate although octanoyl-ACP is likely to be the physiological substrate.</text>
</comment>
<comment type="catalytic activity">
    <reaction evidence="1">
        <text>octanoyl-[ACP] + L-lysyl-[protein] = N(6)-octanoyl-L-lysyl-[protein] + holo-[ACP] + H(+)</text>
        <dbReference type="Rhea" id="RHEA:17665"/>
        <dbReference type="Rhea" id="RHEA-COMP:9636"/>
        <dbReference type="Rhea" id="RHEA-COMP:9685"/>
        <dbReference type="Rhea" id="RHEA-COMP:9752"/>
        <dbReference type="Rhea" id="RHEA-COMP:9928"/>
        <dbReference type="ChEBI" id="CHEBI:15378"/>
        <dbReference type="ChEBI" id="CHEBI:29969"/>
        <dbReference type="ChEBI" id="CHEBI:64479"/>
        <dbReference type="ChEBI" id="CHEBI:78463"/>
        <dbReference type="ChEBI" id="CHEBI:78809"/>
        <dbReference type="EC" id="2.3.1.181"/>
    </reaction>
</comment>
<comment type="pathway">
    <text evidence="1">Protein modification; protein lipoylation via endogenous pathway; protein N(6)-(lipoyl)lysine from octanoyl-[acyl-carrier-protein]: step 1/2.</text>
</comment>
<comment type="subcellular location">
    <subcellularLocation>
        <location evidence="1">Cytoplasm</location>
    </subcellularLocation>
</comment>
<comment type="miscellaneous">
    <text evidence="1">In the reaction, the free carboxyl group of octanoic acid is attached via an amide linkage to the epsilon-amino group of a specific lysine residue of lipoyl domains of lipoate-dependent enzymes.</text>
</comment>
<comment type="similarity">
    <text evidence="1">Belongs to the LipB family.</text>
</comment>
<protein>
    <recommendedName>
        <fullName evidence="1">Octanoyltransferase</fullName>
        <ecNumber evidence="1">2.3.1.181</ecNumber>
    </recommendedName>
    <alternativeName>
        <fullName evidence="1">Lipoate-protein ligase B</fullName>
    </alternativeName>
    <alternativeName>
        <fullName evidence="1">Lipoyl/octanoyl transferase</fullName>
    </alternativeName>
    <alternativeName>
        <fullName evidence="1">Octanoyl-[acyl-carrier-protein]-protein N-octanoyltransferase</fullName>
    </alternativeName>
</protein>